<reference key="1">
    <citation type="journal article" date="2001" name="Proc. Natl. Acad. Sci. U.S.A.">
        <title>Complete genomic sequence of Pasteurella multocida Pm70.</title>
        <authorList>
            <person name="May B.J."/>
            <person name="Zhang Q."/>
            <person name="Li L.L."/>
            <person name="Paustian M.L."/>
            <person name="Whittam T.S."/>
            <person name="Kapur V."/>
        </authorList>
    </citation>
    <scope>NUCLEOTIDE SEQUENCE [LARGE SCALE GENOMIC DNA]</scope>
    <source>
        <strain>Pm70</strain>
    </source>
</reference>
<keyword id="KW-0012">Acyltransferase</keyword>
<keyword id="KW-0963">Cytoplasm</keyword>
<keyword id="KW-0441">Lipid A biosynthesis</keyword>
<keyword id="KW-0444">Lipid biosynthesis</keyword>
<keyword id="KW-0443">Lipid metabolism</keyword>
<keyword id="KW-1185">Reference proteome</keyword>
<keyword id="KW-0677">Repeat</keyword>
<keyword id="KW-0808">Transferase</keyword>
<organism>
    <name type="scientific">Pasteurella multocida (strain Pm70)</name>
    <dbReference type="NCBI Taxonomy" id="272843"/>
    <lineage>
        <taxon>Bacteria</taxon>
        <taxon>Pseudomonadati</taxon>
        <taxon>Pseudomonadota</taxon>
        <taxon>Gammaproteobacteria</taxon>
        <taxon>Pasteurellales</taxon>
        <taxon>Pasteurellaceae</taxon>
        <taxon>Pasteurella</taxon>
    </lineage>
</organism>
<proteinExistence type="inferred from homology"/>
<evidence type="ECO:0000255" key="1">
    <source>
        <dbReference type="HAMAP-Rule" id="MF_00387"/>
    </source>
</evidence>
<accession>Q9CJK8</accession>
<feature type="chain" id="PRO_0000188056" description="Acyl-[acyl-carrier-protein]--UDP-N-acetylglucosamine O-acyltransferase">
    <location>
        <begin position="1"/>
        <end position="262"/>
    </location>
</feature>
<name>LPXA_PASMU</name>
<protein>
    <recommendedName>
        <fullName evidence="1">Acyl-[acyl-carrier-protein]--UDP-N-acetylglucosamine O-acyltransferase</fullName>
        <shortName evidence="1">UDP-N-acetylglucosamine acyltransferase</shortName>
        <ecNumber evidence="1">2.3.1.129</ecNumber>
    </recommendedName>
</protein>
<dbReference type="EC" id="2.3.1.129" evidence="1"/>
<dbReference type="EMBL" id="AE004439">
    <property type="protein sequence ID" value="AAK04080.1"/>
    <property type="molecule type" value="Genomic_DNA"/>
</dbReference>
<dbReference type="RefSeq" id="WP_005719528.1">
    <property type="nucleotide sequence ID" value="NC_002663.1"/>
</dbReference>
<dbReference type="SMR" id="Q9CJK8"/>
<dbReference type="STRING" id="272843.PM1996"/>
<dbReference type="EnsemblBacteria" id="AAK04080">
    <property type="protein sequence ID" value="AAK04080"/>
    <property type="gene ID" value="PM1996"/>
</dbReference>
<dbReference type="KEGG" id="pmu:PM1996"/>
<dbReference type="HOGENOM" id="CLU_061249_0_0_6"/>
<dbReference type="OrthoDB" id="9807278at2"/>
<dbReference type="UniPathway" id="UPA00359">
    <property type="reaction ID" value="UER00477"/>
</dbReference>
<dbReference type="Proteomes" id="UP000000809">
    <property type="component" value="Chromosome"/>
</dbReference>
<dbReference type="GO" id="GO:0005737">
    <property type="term" value="C:cytoplasm"/>
    <property type="evidence" value="ECO:0007669"/>
    <property type="project" value="UniProtKB-SubCell"/>
</dbReference>
<dbReference type="GO" id="GO:0016020">
    <property type="term" value="C:membrane"/>
    <property type="evidence" value="ECO:0007669"/>
    <property type="project" value="GOC"/>
</dbReference>
<dbReference type="GO" id="GO:0008780">
    <property type="term" value="F:acyl-[acyl-carrier-protein]-UDP-N-acetylglucosamine O-acyltransferase activity"/>
    <property type="evidence" value="ECO:0007669"/>
    <property type="project" value="UniProtKB-UniRule"/>
</dbReference>
<dbReference type="GO" id="GO:0009245">
    <property type="term" value="P:lipid A biosynthetic process"/>
    <property type="evidence" value="ECO:0007669"/>
    <property type="project" value="UniProtKB-UniRule"/>
</dbReference>
<dbReference type="CDD" id="cd03351">
    <property type="entry name" value="LbH_UDP-GlcNAc_AT"/>
    <property type="match status" value="1"/>
</dbReference>
<dbReference type="FunFam" id="2.160.10.10:FF:000003">
    <property type="entry name" value="Acyl-[acyl-carrier-protein]--UDP-N-acetylglucosamine O-acyltransferase"/>
    <property type="match status" value="1"/>
</dbReference>
<dbReference type="Gene3D" id="2.160.10.10">
    <property type="entry name" value="Hexapeptide repeat proteins"/>
    <property type="match status" value="1"/>
</dbReference>
<dbReference type="Gene3D" id="1.20.1180.10">
    <property type="entry name" value="Udp N-acetylglucosamine O-acyltransferase, C-terminal domain"/>
    <property type="match status" value="1"/>
</dbReference>
<dbReference type="HAMAP" id="MF_00387">
    <property type="entry name" value="LpxA"/>
    <property type="match status" value="1"/>
</dbReference>
<dbReference type="InterPro" id="IPR029098">
    <property type="entry name" value="Acetyltransf_C"/>
</dbReference>
<dbReference type="InterPro" id="IPR037157">
    <property type="entry name" value="Acetyltransf_C_sf"/>
</dbReference>
<dbReference type="InterPro" id="IPR001451">
    <property type="entry name" value="Hexapep"/>
</dbReference>
<dbReference type="InterPro" id="IPR018357">
    <property type="entry name" value="Hexapep_transf_CS"/>
</dbReference>
<dbReference type="InterPro" id="IPR010137">
    <property type="entry name" value="Lipid_A_LpxA"/>
</dbReference>
<dbReference type="InterPro" id="IPR011004">
    <property type="entry name" value="Trimer_LpxA-like_sf"/>
</dbReference>
<dbReference type="NCBIfam" id="TIGR01852">
    <property type="entry name" value="lipid_A_lpxA"/>
    <property type="match status" value="1"/>
</dbReference>
<dbReference type="NCBIfam" id="NF003657">
    <property type="entry name" value="PRK05289.1"/>
    <property type="match status" value="1"/>
</dbReference>
<dbReference type="PANTHER" id="PTHR43480">
    <property type="entry name" value="ACYL-[ACYL-CARRIER-PROTEIN]--UDP-N-ACETYLGLUCOSAMINE O-ACYLTRANSFERASE"/>
    <property type="match status" value="1"/>
</dbReference>
<dbReference type="PANTHER" id="PTHR43480:SF1">
    <property type="entry name" value="ACYL-[ACYL-CARRIER-PROTEIN]--UDP-N-ACETYLGLUCOSAMINE O-ACYLTRANSFERASE, MITOCHONDRIAL-RELATED"/>
    <property type="match status" value="1"/>
</dbReference>
<dbReference type="Pfam" id="PF13720">
    <property type="entry name" value="Acetyltransf_11"/>
    <property type="match status" value="1"/>
</dbReference>
<dbReference type="Pfam" id="PF00132">
    <property type="entry name" value="Hexapep"/>
    <property type="match status" value="2"/>
</dbReference>
<dbReference type="PIRSF" id="PIRSF000456">
    <property type="entry name" value="UDP-GlcNAc_acltr"/>
    <property type="match status" value="1"/>
</dbReference>
<dbReference type="SUPFAM" id="SSF51161">
    <property type="entry name" value="Trimeric LpxA-like enzymes"/>
    <property type="match status" value="1"/>
</dbReference>
<dbReference type="PROSITE" id="PS00101">
    <property type="entry name" value="HEXAPEP_TRANSFERASES"/>
    <property type="match status" value="3"/>
</dbReference>
<gene>
    <name evidence="1" type="primary">lpxA</name>
    <name type="ordered locus">PM1996</name>
</gene>
<sequence>MIHPTAQIHPTSIVEAGAKIGENVVIGPFCLVGAEVEIGAGTILHSHVVVKGITKIGRDNQIFQFASIGDTNQDLKYQGEPTRTIIGDRNRIRESVTIHRGTAQGGSVTVIGDDNLLMVNVHVAHDCRIKNRCILANNATLAGHVELDDFVIVGGMSAIHQFVIVGAHVMLGGGSMVSQDVPPYVMAQGNHAKPFGVNIEGLKRRGFDKPTLHAIRNVYKLIYRSGKTLEEVMPEIEQVAAKESAISFFVEFFKRSTRGIIR</sequence>
<comment type="function">
    <text evidence="1">Involved in the biosynthesis of lipid A, a phosphorylated glycolipid that anchors the lipopolysaccharide to the outer membrane of the cell.</text>
</comment>
<comment type="catalytic activity">
    <reaction evidence="1">
        <text>a (3R)-hydroxyacyl-[ACP] + UDP-N-acetyl-alpha-D-glucosamine = a UDP-3-O-[(3R)-3-hydroxyacyl]-N-acetyl-alpha-D-glucosamine + holo-[ACP]</text>
        <dbReference type="Rhea" id="RHEA:67812"/>
        <dbReference type="Rhea" id="RHEA-COMP:9685"/>
        <dbReference type="Rhea" id="RHEA-COMP:9945"/>
        <dbReference type="ChEBI" id="CHEBI:57705"/>
        <dbReference type="ChEBI" id="CHEBI:64479"/>
        <dbReference type="ChEBI" id="CHEBI:78827"/>
        <dbReference type="ChEBI" id="CHEBI:173225"/>
        <dbReference type="EC" id="2.3.1.129"/>
    </reaction>
</comment>
<comment type="pathway">
    <text evidence="1">Glycolipid biosynthesis; lipid IV(A) biosynthesis; lipid IV(A) from (3R)-3-hydroxytetradecanoyl-[acyl-carrier-protein] and UDP-N-acetyl-alpha-D-glucosamine: step 1/6.</text>
</comment>
<comment type="subunit">
    <text evidence="1">Homotrimer.</text>
</comment>
<comment type="subcellular location">
    <subcellularLocation>
        <location evidence="1">Cytoplasm</location>
    </subcellularLocation>
</comment>
<comment type="similarity">
    <text evidence="1">Belongs to the transferase hexapeptide repeat family. LpxA subfamily.</text>
</comment>